<keyword id="KW-0058">Aromatic hydrocarbons catabolism</keyword>
<keyword id="KW-0520">NAD</keyword>
<keyword id="KW-0560">Oxidoreductase</keyword>
<organism>
    <name type="scientific">Comamonas testosteroni</name>
    <name type="common">Pseudomonas testosteroni</name>
    <dbReference type="NCBI Taxonomy" id="285"/>
    <lineage>
        <taxon>Bacteria</taxon>
        <taxon>Pseudomonadati</taxon>
        <taxon>Pseudomonadota</taxon>
        <taxon>Betaproteobacteria</taxon>
        <taxon>Burkholderiales</taxon>
        <taxon>Comamonadaceae</taxon>
        <taxon>Comamonas</taxon>
    </lineage>
</organism>
<evidence type="ECO:0000255" key="1">
    <source>
        <dbReference type="HAMAP-Rule" id="MF_01657"/>
    </source>
</evidence>
<comment type="catalytic activity">
    <reaction evidence="1">
        <text>acetaldehyde + NAD(+) + CoA = acetyl-CoA + NADH + H(+)</text>
        <dbReference type="Rhea" id="RHEA:23288"/>
        <dbReference type="ChEBI" id="CHEBI:15343"/>
        <dbReference type="ChEBI" id="CHEBI:15378"/>
        <dbReference type="ChEBI" id="CHEBI:57287"/>
        <dbReference type="ChEBI" id="CHEBI:57288"/>
        <dbReference type="ChEBI" id="CHEBI:57540"/>
        <dbReference type="ChEBI" id="CHEBI:57945"/>
        <dbReference type="EC" id="1.2.1.10"/>
    </reaction>
</comment>
<comment type="similarity">
    <text evidence="1">Belongs to the acetaldehyde dehydrogenase family.</text>
</comment>
<gene>
    <name type="primary">tesF</name>
</gene>
<sequence length="307" mass="32667">MTQKKIKCALIGPGNIGTDLLMKLQRSPILEPVWMVGIDPESDGLKRAREMGIKTTADGVDGLLPFVKEDGIQIAFDATSAYVHAENSRKLNELGVLMIDLTPAAIGPYCVPSVNLAEKVAEKAMNVNMVTCGGQATIPMVAAVSRVQAVSYGEIVATVSSRSVGPGTRKNIDEFTRTTSGAVEKIGGAQKGKAIIVINPAEPPLIMRDTIHCLTVDTPKPAEIEASVHAMIKEVQKYVPGYKLVNGPVIDGNRVSIYMEVEGLGDYLPKYAGNLDIMTAAAARTAEMFAEEILAGRFELAEAAVAV</sequence>
<reference key="1">
    <citation type="journal article" date="2003" name="Appl. Environ. Microbiol.">
        <title>Gene encoding the hydrolase for the product of the meta-cleavage reaction in testosterone degradation by Comamonas testosteroni.</title>
        <authorList>
            <person name="Horinouchi M."/>
            <person name="Hayashi T."/>
            <person name="Koshino H."/>
            <person name="Yamamoto T."/>
            <person name="Kudo T."/>
        </authorList>
    </citation>
    <scope>NUCLEOTIDE SEQUENCE [GENOMIC DNA]</scope>
    <source>
        <strain>TA441</strain>
    </source>
</reference>
<name>ACDH1_COMTE</name>
<feature type="chain" id="PRO_0000387650" description="Acetaldehyde dehydrogenase 1">
    <location>
        <begin position="1"/>
        <end position="307"/>
    </location>
</feature>
<feature type="active site" description="Acyl-thioester intermediate" evidence="1">
    <location>
        <position position="132"/>
    </location>
</feature>
<feature type="binding site" evidence="1">
    <location>
        <begin position="163"/>
        <end position="171"/>
    </location>
    <ligand>
        <name>NAD(+)</name>
        <dbReference type="ChEBI" id="CHEBI:57540"/>
    </ligand>
</feature>
<feature type="binding site" evidence="1">
    <location>
        <position position="274"/>
    </location>
    <ligand>
        <name>NAD(+)</name>
        <dbReference type="ChEBI" id="CHEBI:57540"/>
    </ligand>
</feature>
<proteinExistence type="inferred from homology"/>
<protein>
    <recommendedName>
        <fullName evidence="1">Acetaldehyde dehydrogenase 1</fullName>
        <ecNumber evidence="1">1.2.1.10</ecNumber>
    </recommendedName>
    <alternativeName>
        <fullName evidence="1">Acetaldehyde dehydrogenase [acetylating] 1</fullName>
    </alternativeName>
</protein>
<accession>Q83VZ4</accession>
<dbReference type="EC" id="1.2.1.10" evidence="1"/>
<dbReference type="EMBL" id="AB063482">
    <property type="protein sequence ID" value="BAC67695.1"/>
    <property type="molecule type" value="Genomic_DNA"/>
</dbReference>
<dbReference type="RefSeq" id="WP_004341179.1">
    <property type="nucleotide sequence ID" value="NZ_BKBW01000005.1"/>
</dbReference>
<dbReference type="SMR" id="Q83VZ4"/>
<dbReference type="GeneID" id="69559076"/>
<dbReference type="BioCyc" id="MetaCyc:MONOMER-16930"/>
<dbReference type="GO" id="GO:0008774">
    <property type="term" value="F:acetaldehyde dehydrogenase (acetylating) activity"/>
    <property type="evidence" value="ECO:0007669"/>
    <property type="project" value="UniProtKB-UniRule"/>
</dbReference>
<dbReference type="GO" id="GO:0051287">
    <property type="term" value="F:NAD binding"/>
    <property type="evidence" value="ECO:0007669"/>
    <property type="project" value="UniProtKB-UniRule"/>
</dbReference>
<dbReference type="GO" id="GO:0009056">
    <property type="term" value="P:catabolic process"/>
    <property type="evidence" value="ECO:0007669"/>
    <property type="project" value="UniProtKB-KW"/>
</dbReference>
<dbReference type="CDD" id="cd23933">
    <property type="entry name" value="ALDH_C"/>
    <property type="match status" value="1"/>
</dbReference>
<dbReference type="Gene3D" id="3.30.360.10">
    <property type="entry name" value="Dihydrodipicolinate Reductase, domain 2"/>
    <property type="match status" value="1"/>
</dbReference>
<dbReference type="Gene3D" id="3.40.50.720">
    <property type="entry name" value="NAD(P)-binding Rossmann-like Domain"/>
    <property type="match status" value="1"/>
</dbReference>
<dbReference type="HAMAP" id="MF_01657">
    <property type="entry name" value="Ac_ald_DH_ac"/>
    <property type="match status" value="1"/>
</dbReference>
<dbReference type="InterPro" id="IPR003361">
    <property type="entry name" value="Acetaldehyde_dehydrogenase"/>
</dbReference>
<dbReference type="InterPro" id="IPR015426">
    <property type="entry name" value="Acetylaldehyde_DH_C"/>
</dbReference>
<dbReference type="InterPro" id="IPR036291">
    <property type="entry name" value="NAD(P)-bd_dom_sf"/>
</dbReference>
<dbReference type="InterPro" id="IPR000534">
    <property type="entry name" value="Semialdehyde_DH_NAD-bd"/>
</dbReference>
<dbReference type="NCBIfam" id="TIGR03215">
    <property type="entry name" value="ac_ald_DH_ac"/>
    <property type="match status" value="1"/>
</dbReference>
<dbReference type="NCBIfam" id="NF006157">
    <property type="entry name" value="PRK08300.1"/>
    <property type="match status" value="1"/>
</dbReference>
<dbReference type="Pfam" id="PF09290">
    <property type="entry name" value="AcetDehyd-dimer"/>
    <property type="match status" value="1"/>
</dbReference>
<dbReference type="PIRSF" id="PIRSF015689">
    <property type="entry name" value="Actaldh_dh_actl"/>
    <property type="match status" value="1"/>
</dbReference>
<dbReference type="SMART" id="SM00859">
    <property type="entry name" value="Semialdhyde_dh"/>
    <property type="match status" value="1"/>
</dbReference>
<dbReference type="SUPFAM" id="SSF55347">
    <property type="entry name" value="Glyceraldehyde-3-phosphate dehydrogenase-like, C-terminal domain"/>
    <property type="match status" value="1"/>
</dbReference>
<dbReference type="SUPFAM" id="SSF51735">
    <property type="entry name" value="NAD(P)-binding Rossmann-fold domains"/>
    <property type="match status" value="1"/>
</dbReference>